<dbReference type="EMBL" id="CP000767">
    <property type="protein sequence ID" value="EAU00008.1"/>
    <property type="molecule type" value="Genomic_DNA"/>
</dbReference>
<dbReference type="RefSeq" id="WP_009650368.1">
    <property type="nucleotide sequence ID" value="NC_009715.2"/>
</dbReference>
<dbReference type="SMR" id="A7GX83"/>
<dbReference type="STRING" id="360105.CCV52592_0957"/>
<dbReference type="KEGG" id="ccv:CCV52592_0957"/>
<dbReference type="HOGENOM" id="CLU_148047_0_1_7"/>
<dbReference type="OrthoDB" id="5339943at2"/>
<dbReference type="Proteomes" id="UP000006380">
    <property type="component" value="Chromosome"/>
</dbReference>
<dbReference type="GO" id="GO:0005886">
    <property type="term" value="C:plasma membrane"/>
    <property type="evidence" value="ECO:0007669"/>
    <property type="project" value="UniProtKB-SubCell"/>
</dbReference>
<dbReference type="GO" id="GO:0045259">
    <property type="term" value="C:proton-transporting ATP synthase complex"/>
    <property type="evidence" value="ECO:0007669"/>
    <property type="project" value="UniProtKB-KW"/>
</dbReference>
<dbReference type="GO" id="GO:0033177">
    <property type="term" value="C:proton-transporting two-sector ATPase complex, proton-transporting domain"/>
    <property type="evidence" value="ECO:0007669"/>
    <property type="project" value="InterPro"/>
</dbReference>
<dbReference type="GO" id="GO:0008289">
    <property type="term" value="F:lipid binding"/>
    <property type="evidence" value="ECO:0007669"/>
    <property type="project" value="UniProtKB-KW"/>
</dbReference>
<dbReference type="GO" id="GO:0046933">
    <property type="term" value="F:proton-transporting ATP synthase activity, rotational mechanism"/>
    <property type="evidence" value="ECO:0007669"/>
    <property type="project" value="UniProtKB-UniRule"/>
</dbReference>
<dbReference type="CDD" id="cd18121">
    <property type="entry name" value="ATP-synt_Fo_c"/>
    <property type="match status" value="1"/>
</dbReference>
<dbReference type="FunFam" id="1.20.20.10:FF:000002">
    <property type="entry name" value="ATP synthase subunit c"/>
    <property type="match status" value="1"/>
</dbReference>
<dbReference type="Gene3D" id="1.20.20.10">
    <property type="entry name" value="F1F0 ATP synthase subunit C"/>
    <property type="match status" value="1"/>
</dbReference>
<dbReference type="HAMAP" id="MF_01396">
    <property type="entry name" value="ATP_synth_c_bact"/>
    <property type="match status" value="1"/>
</dbReference>
<dbReference type="InterPro" id="IPR005953">
    <property type="entry name" value="ATP_synth_csu_bac/chlpt"/>
</dbReference>
<dbReference type="InterPro" id="IPR000454">
    <property type="entry name" value="ATP_synth_F0_csu"/>
</dbReference>
<dbReference type="InterPro" id="IPR020537">
    <property type="entry name" value="ATP_synth_F0_csu_DDCD_BS"/>
</dbReference>
<dbReference type="InterPro" id="IPR038662">
    <property type="entry name" value="ATP_synth_F0_csu_sf"/>
</dbReference>
<dbReference type="InterPro" id="IPR002379">
    <property type="entry name" value="ATPase_proteolipid_c-like_dom"/>
</dbReference>
<dbReference type="InterPro" id="IPR035921">
    <property type="entry name" value="F/V-ATP_Csub_sf"/>
</dbReference>
<dbReference type="NCBIfam" id="TIGR01260">
    <property type="entry name" value="ATP_synt_c"/>
    <property type="match status" value="1"/>
</dbReference>
<dbReference type="NCBIfam" id="NF006295">
    <property type="entry name" value="PRK08482.1"/>
    <property type="match status" value="1"/>
</dbReference>
<dbReference type="Pfam" id="PF00137">
    <property type="entry name" value="ATP-synt_C"/>
    <property type="match status" value="1"/>
</dbReference>
<dbReference type="PRINTS" id="PR00124">
    <property type="entry name" value="ATPASEC"/>
</dbReference>
<dbReference type="SUPFAM" id="SSF81333">
    <property type="entry name" value="F1F0 ATP synthase subunit C"/>
    <property type="match status" value="1"/>
</dbReference>
<dbReference type="PROSITE" id="PS00605">
    <property type="entry name" value="ATPASE_C"/>
    <property type="match status" value="1"/>
</dbReference>
<reference key="1">
    <citation type="submission" date="2007-07" db="EMBL/GenBank/DDBJ databases">
        <title>Genome sequence of Campylobacter curvus 525.92 isolated from human feces.</title>
        <authorList>
            <person name="Fouts D.E."/>
            <person name="Mongodin E.F."/>
            <person name="Puiu D."/>
            <person name="Sebastian Y."/>
            <person name="Miller W.G."/>
            <person name="Mandrell R.E."/>
            <person name="Lastovica A.J."/>
            <person name="Nelson K.E."/>
        </authorList>
    </citation>
    <scope>NUCLEOTIDE SEQUENCE [LARGE SCALE GENOMIC DNA]</scope>
    <source>
        <strain>525.92</strain>
    </source>
</reference>
<feature type="chain" id="PRO_0000365856" description="ATP synthase subunit c">
    <location>
        <begin position="1"/>
        <end position="100"/>
    </location>
</feature>
<feature type="transmembrane region" description="Helical" evidence="1">
    <location>
        <begin position="27"/>
        <end position="47"/>
    </location>
</feature>
<feature type="transmembrane region" description="Helical" evidence="1">
    <location>
        <begin position="72"/>
        <end position="92"/>
    </location>
</feature>
<feature type="site" description="Reversibly protonated during proton transport" evidence="1">
    <location>
        <position position="79"/>
    </location>
</feature>
<evidence type="ECO:0000255" key="1">
    <source>
        <dbReference type="HAMAP-Rule" id="MF_01396"/>
    </source>
</evidence>
<name>ATPL_CAMC5</name>
<organism>
    <name type="scientific">Campylobacter curvus (strain 525.92)</name>
    <dbReference type="NCBI Taxonomy" id="360105"/>
    <lineage>
        <taxon>Bacteria</taxon>
        <taxon>Pseudomonadati</taxon>
        <taxon>Campylobacterota</taxon>
        <taxon>Epsilonproteobacteria</taxon>
        <taxon>Campylobacterales</taxon>
        <taxon>Campylobacteraceae</taxon>
        <taxon>Campylobacter</taxon>
    </lineage>
</organism>
<accession>A7GX83</accession>
<sequence>MKKIVLLIVSLAAFAFGADGEMIRSYSVIAAGIGLGLAALGGAIGMGNTAAATISGTARNPGVGSKLMTTMFIALAMIEAQVIYALVITLIVLYANPMLG</sequence>
<comment type="function">
    <text evidence="1">F(1)F(0) ATP synthase produces ATP from ADP in the presence of a proton or sodium gradient. F-type ATPases consist of two structural domains, F(1) containing the extramembraneous catalytic core and F(0) containing the membrane proton channel, linked together by a central stalk and a peripheral stalk. During catalysis, ATP synthesis in the catalytic domain of F(1) is coupled via a rotary mechanism of the central stalk subunits to proton translocation.</text>
</comment>
<comment type="subunit">
    <text evidence="1">F-type ATPases have 2 components, F(1) - the catalytic core - and F(0) - the membrane proton channel. F(1) has five subunits: alpha(3), beta(3), gamma(1), delta(1), epsilon(1). F(0) has three main subunits: a(1), b(2) and c(10-14). The alpha and beta chains form an alternating ring which encloses part of the gamma chain. F(1) is attached to F(0) by a central stalk formed by the gamma and epsilon chains, while a peripheral stalk is formed by the delta and b chains.</text>
</comment>
<comment type="subcellular location">
    <subcellularLocation>
        <location evidence="1">Cell inner membrane</location>
        <topology evidence="1">Multi-pass membrane protein</topology>
    </subcellularLocation>
</comment>
<comment type="similarity">
    <text evidence="1">Belongs to the ATPase C chain family.</text>
</comment>
<gene>
    <name evidence="1" type="primary">atpE</name>
    <name type="ordered locus">Ccur92_05210</name>
    <name type="ORF">CCV52592_0957</name>
</gene>
<proteinExistence type="inferred from homology"/>
<protein>
    <recommendedName>
        <fullName evidence="1">ATP synthase subunit c</fullName>
    </recommendedName>
    <alternativeName>
        <fullName evidence="1">ATP synthase F(0) sector subunit c</fullName>
    </alternativeName>
    <alternativeName>
        <fullName evidence="1">F-type ATPase subunit c</fullName>
        <shortName evidence="1">F-ATPase subunit c</shortName>
    </alternativeName>
    <alternativeName>
        <fullName evidence="1">Lipid-binding protein</fullName>
    </alternativeName>
</protein>
<keyword id="KW-0066">ATP synthesis</keyword>
<keyword id="KW-0997">Cell inner membrane</keyword>
<keyword id="KW-1003">Cell membrane</keyword>
<keyword id="KW-0138">CF(0)</keyword>
<keyword id="KW-0375">Hydrogen ion transport</keyword>
<keyword id="KW-0406">Ion transport</keyword>
<keyword id="KW-0446">Lipid-binding</keyword>
<keyword id="KW-0472">Membrane</keyword>
<keyword id="KW-1185">Reference proteome</keyword>
<keyword id="KW-0812">Transmembrane</keyword>
<keyword id="KW-1133">Transmembrane helix</keyword>
<keyword id="KW-0813">Transport</keyword>